<comment type="function">
    <text evidence="1">Functions in the early steps of protein synthesis of a small number of specific mRNAs. Acts by directing the binding of methionyl-tRNAi to 40S ribosomal subunits. In contrast to the eIF-2 complex, it binds methionyl-tRNAi to 40S subunits in a codon-dependent manner, whereas the eIF-2 complex binds methionyl-tRNAi to 40S subunits in a GTP-dependent manner.</text>
</comment>
<comment type="similarity">
    <text evidence="4">Belongs to the WD repeat EIF2A family.</text>
</comment>
<keyword id="KW-0175">Coiled coil</keyword>
<keyword id="KW-0396">Initiation factor</keyword>
<keyword id="KW-0648">Protein biosynthesis</keyword>
<keyword id="KW-1185">Reference proteome</keyword>
<keyword id="KW-0677">Repeat</keyword>
<keyword id="KW-0810">Translation regulation</keyword>
<keyword id="KW-0853">WD repeat</keyword>
<reference key="1">
    <citation type="journal article" date="2005" name="Genome Biol.">
        <title>Full-length cDNAs from chicken bursal lymphocytes to facilitate gene function analysis.</title>
        <authorList>
            <person name="Caldwell R.B."/>
            <person name="Kierzek A.M."/>
            <person name="Arakawa H."/>
            <person name="Bezzubov Y."/>
            <person name="Zaim J."/>
            <person name="Fiedler P."/>
            <person name="Kutter S."/>
            <person name="Blagodatski A."/>
            <person name="Kostovska D."/>
            <person name="Koter M."/>
            <person name="Plachy J."/>
            <person name="Carninci P."/>
            <person name="Hayashizaki Y."/>
            <person name="Buerstedde J.-M."/>
        </authorList>
    </citation>
    <scope>NUCLEOTIDE SEQUENCE [LARGE SCALE MRNA]</scope>
    <source>
        <strain>CB</strain>
        <tissue>Bursa of Fabricius</tissue>
    </source>
</reference>
<accession>Q5ZKC1</accession>
<protein>
    <recommendedName>
        <fullName>Eukaryotic translation initiation factor 2A</fullName>
        <shortName>eIF-2A</shortName>
    </recommendedName>
</protein>
<sequence>MAPPAPLLAVRGSEGLFMVNGPPSFTESAVFQRDSGRNCKAVAFSKDGSLFAWCNGEKVNIVNVTSAGLLRSFDLPKVVCLEFSPKNNILATWQAYSAAKDGTAGAPNLQLYDVKTGKCLKSFIQKKMQNWCPCWADDESICARNVNNEVHFFENNNFNTIANKLHLQKVNDFVLSPGAQPTKVAVYVPGSKGAPSFVRLYQYPNFGGPQSALANKSFFKADKVTMLWNKKATAVLVIASTDVDKTGASYYGEQTLHYIATNGESAIVQLPKNGPIYDVVWNPNSVEFCAVYGFMPAKATVFNLKCDPVFDFGTGPRNAAYYSPHGHILVLAGFGNLRGQMEVWDVKNYKLISKPVASDSTYFAWCPDGEHIVTATCAPRLRVSNGYKIWHYTGSVLHNYEVPSNEEMWQVSWQPFLDGVFPVKAVKYQAVPSELPSAEPKPAQAYRPPALRNKPVTSSKLHEDEPPQNMKPQSGSSEKPLSKTALKNQKKHEPKKAAKQEAKADCSQESTQSSASQNTPRSAVPVVTSGDPEIDKKIKNLKKKLKAIEQLKEQAAAGKQLEKNQLEKIQKESALLQELEDLELGL</sequence>
<organism>
    <name type="scientific">Gallus gallus</name>
    <name type="common">Chicken</name>
    <dbReference type="NCBI Taxonomy" id="9031"/>
    <lineage>
        <taxon>Eukaryota</taxon>
        <taxon>Metazoa</taxon>
        <taxon>Chordata</taxon>
        <taxon>Craniata</taxon>
        <taxon>Vertebrata</taxon>
        <taxon>Euteleostomi</taxon>
        <taxon>Archelosauria</taxon>
        <taxon>Archosauria</taxon>
        <taxon>Dinosauria</taxon>
        <taxon>Saurischia</taxon>
        <taxon>Theropoda</taxon>
        <taxon>Coelurosauria</taxon>
        <taxon>Aves</taxon>
        <taxon>Neognathae</taxon>
        <taxon>Galloanserae</taxon>
        <taxon>Galliformes</taxon>
        <taxon>Phasianidae</taxon>
        <taxon>Phasianinae</taxon>
        <taxon>Gallus</taxon>
    </lineage>
</organism>
<gene>
    <name type="primary">EIF2A</name>
    <name type="ORF">RCJMB04_11n11</name>
</gene>
<feature type="chain" id="PRO_0000286078" description="Eukaryotic translation initiation factor 2A">
    <location>
        <begin position="1"/>
        <end position="586"/>
    </location>
</feature>
<feature type="repeat" description="WD 1">
    <location>
        <begin position="23"/>
        <end position="63"/>
    </location>
</feature>
<feature type="repeat" description="WD 2">
    <location>
        <begin position="125"/>
        <end position="163"/>
    </location>
</feature>
<feature type="repeat" description="WD 3">
    <location>
        <begin position="356"/>
        <end position="401"/>
    </location>
</feature>
<feature type="region of interest" description="Disordered" evidence="3">
    <location>
        <begin position="434"/>
        <end position="531"/>
    </location>
</feature>
<feature type="coiled-coil region" evidence="2">
    <location>
        <begin position="532"/>
        <end position="583"/>
    </location>
</feature>
<feature type="compositionally biased region" description="Polar residues" evidence="3">
    <location>
        <begin position="470"/>
        <end position="479"/>
    </location>
</feature>
<feature type="compositionally biased region" description="Basic and acidic residues" evidence="3">
    <location>
        <begin position="495"/>
        <end position="506"/>
    </location>
</feature>
<feature type="compositionally biased region" description="Polar residues" evidence="3">
    <location>
        <begin position="507"/>
        <end position="521"/>
    </location>
</feature>
<proteinExistence type="evidence at transcript level"/>
<evidence type="ECO:0000250" key="1">
    <source>
        <dbReference type="UniProtKB" id="Q9BY44"/>
    </source>
</evidence>
<evidence type="ECO:0000255" key="2"/>
<evidence type="ECO:0000256" key="3">
    <source>
        <dbReference type="SAM" id="MobiDB-lite"/>
    </source>
</evidence>
<evidence type="ECO:0000305" key="4"/>
<dbReference type="EMBL" id="AJ720163">
    <property type="protein sequence ID" value="CAG31822.1"/>
    <property type="molecule type" value="mRNA"/>
</dbReference>
<dbReference type="RefSeq" id="NP_001026494.1">
    <property type="nucleotide sequence ID" value="NM_001031323.2"/>
</dbReference>
<dbReference type="SMR" id="Q5ZKC1"/>
<dbReference type="BioGRID" id="685344">
    <property type="interactions" value="1"/>
</dbReference>
<dbReference type="FunCoup" id="Q5ZKC1">
    <property type="interactions" value="2976"/>
</dbReference>
<dbReference type="STRING" id="9031.ENSGALP00000064036"/>
<dbReference type="PaxDb" id="9031-ENSGALP00000016918"/>
<dbReference type="GeneID" id="425042"/>
<dbReference type="KEGG" id="gga:425042"/>
<dbReference type="CTD" id="83939"/>
<dbReference type="VEuPathDB" id="HostDB:geneid_425042"/>
<dbReference type="eggNOG" id="KOG2315">
    <property type="taxonomic scope" value="Eukaryota"/>
</dbReference>
<dbReference type="InParanoid" id="Q5ZKC1"/>
<dbReference type="OMA" id="RCCAYSP"/>
<dbReference type="OrthoDB" id="2194683at2759"/>
<dbReference type="PhylomeDB" id="Q5ZKC1"/>
<dbReference type="PRO" id="PR:Q5ZKC1"/>
<dbReference type="Proteomes" id="UP000000539">
    <property type="component" value="Unassembled WGS sequence"/>
</dbReference>
<dbReference type="GO" id="GO:0005737">
    <property type="term" value="C:cytoplasm"/>
    <property type="evidence" value="ECO:0000250"/>
    <property type="project" value="UniProtKB"/>
</dbReference>
<dbReference type="GO" id="GO:0022627">
    <property type="term" value="C:cytosolic small ribosomal subunit"/>
    <property type="evidence" value="ECO:0000318"/>
    <property type="project" value="GO_Central"/>
</dbReference>
<dbReference type="GO" id="GO:0005850">
    <property type="term" value="C:eukaryotic translation initiation factor 2 complex"/>
    <property type="evidence" value="ECO:0000250"/>
    <property type="project" value="UniProtKB"/>
</dbReference>
<dbReference type="GO" id="GO:0003729">
    <property type="term" value="F:mRNA binding"/>
    <property type="evidence" value="ECO:0000318"/>
    <property type="project" value="GO_Central"/>
</dbReference>
<dbReference type="GO" id="GO:0043022">
    <property type="term" value="F:ribosome binding"/>
    <property type="evidence" value="ECO:0000250"/>
    <property type="project" value="UniProtKB"/>
</dbReference>
<dbReference type="GO" id="GO:0003743">
    <property type="term" value="F:translation initiation factor activity"/>
    <property type="evidence" value="ECO:0000250"/>
    <property type="project" value="UniProtKB"/>
</dbReference>
<dbReference type="GO" id="GO:0000049">
    <property type="term" value="F:tRNA binding"/>
    <property type="evidence" value="ECO:0000250"/>
    <property type="project" value="UniProtKB"/>
</dbReference>
<dbReference type="GO" id="GO:0006417">
    <property type="term" value="P:regulation of translation"/>
    <property type="evidence" value="ECO:0000250"/>
    <property type="project" value="UniProtKB"/>
</dbReference>
<dbReference type="GO" id="GO:0042255">
    <property type="term" value="P:ribosome assembly"/>
    <property type="evidence" value="ECO:0000250"/>
    <property type="project" value="UniProtKB"/>
</dbReference>
<dbReference type="FunFam" id="2.130.10.10:FF:000407">
    <property type="entry name" value="Eukaryotic translation initiation factor 2A"/>
    <property type="match status" value="1"/>
</dbReference>
<dbReference type="FunFam" id="2.130.10.10:FF:000976">
    <property type="entry name" value="Eukaryotic translation initiation factor 2A"/>
    <property type="match status" value="1"/>
</dbReference>
<dbReference type="Gene3D" id="2.130.10.10">
    <property type="entry name" value="YVTN repeat-like/Quinoprotein amine dehydrogenase"/>
    <property type="match status" value="2"/>
</dbReference>
<dbReference type="InterPro" id="IPR011387">
    <property type="entry name" value="TIF2A"/>
</dbReference>
<dbReference type="InterPro" id="IPR013979">
    <property type="entry name" value="TIF_beta_prop-like"/>
</dbReference>
<dbReference type="InterPro" id="IPR015943">
    <property type="entry name" value="WD40/YVTN_repeat-like_dom_sf"/>
</dbReference>
<dbReference type="InterPro" id="IPR036322">
    <property type="entry name" value="WD40_repeat_dom_sf"/>
</dbReference>
<dbReference type="PANTHER" id="PTHR13227">
    <property type="entry name" value="EUKARYOTIC TRANSLATION INITIATION FACTOR 2A"/>
    <property type="match status" value="1"/>
</dbReference>
<dbReference type="PANTHER" id="PTHR13227:SF0">
    <property type="entry name" value="EUKARYOTIC TRANSLATION INITIATION FACTOR 2A"/>
    <property type="match status" value="1"/>
</dbReference>
<dbReference type="Pfam" id="PF08662">
    <property type="entry name" value="eIF2A"/>
    <property type="match status" value="1"/>
</dbReference>
<dbReference type="PIRSF" id="PIRSF017222">
    <property type="entry name" value="eIF2A"/>
    <property type="match status" value="1"/>
</dbReference>
<dbReference type="SUPFAM" id="SSF50978">
    <property type="entry name" value="WD40 repeat-like"/>
    <property type="match status" value="1"/>
</dbReference>
<name>EIF2A_CHICK</name>